<dbReference type="EC" id="2.5.1.-" evidence="1"/>
<dbReference type="EMBL" id="AE015929">
    <property type="protein sequence ID" value="AAO03828.1"/>
    <property type="molecule type" value="Genomic_DNA"/>
</dbReference>
<dbReference type="RefSeq" id="NP_763786.1">
    <property type="nucleotide sequence ID" value="NC_004461.1"/>
</dbReference>
<dbReference type="RefSeq" id="WP_002437790.1">
    <property type="nucleotide sequence ID" value="NZ_WBME01000011.1"/>
</dbReference>
<dbReference type="SMR" id="P59291"/>
<dbReference type="KEGG" id="sep:SE_0231"/>
<dbReference type="PATRIC" id="fig|176280.10.peg.210"/>
<dbReference type="eggNOG" id="COG0346">
    <property type="taxonomic scope" value="Bacteria"/>
</dbReference>
<dbReference type="HOGENOM" id="CLU_121356_0_0_9"/>
<dbReference type="OrthoDB" id="192739at2"/>
<dbReference type="Proteomes" id="UP000001411">
    <property type="component" value="Chromosome"/>
</dbReference>
<dbReference type="GO" id="GO:0005737">
    <property type="term" value="C:cytoplasm"/>
    <property type="evidence" value="ECO:0007669"/>
    <property type="project" value="UniProtKB-SubCell"/>
</dbReference>
<dbReference type="GO" id="GO:0000287">
    <property type="term" value="F:magnesium ion binding"/>
    <property type="evidence" value="ECO:0007669"/>
    <property type="project" value="UniProtKB-UniRule"/>
</dbReference>
<dbReference type="GO" id="GO:0016765">
    <property type="term" value="F:transferase activity, transferring alkyl or aryl (other than methyl) groups"/>
    <property type="evidence" value="ECO:0007669"/>
    <property type="project" value="UniProtKB-UniRule"/>
</dbReference>
<dbReference type="GO" id="GO:0046677">
    <property type="term" value="P:response to antibiotic"/>
    <property type="evidence" value="ECO:0007669"/>
    <property type="project" value="UniProtKB-UniRule"/>
</dbReference>
<dbReference type="CDD" id="cd08363">
    <property type="entry name" value="FosB"/>
    <property type="match status" value="1"/>
</dbReference>
<dbReference type="Gene3D" id="3.10.180.10">
    <property type="entry name" value="2,3-Dihydroxybiphenyl 1,2-Dioxygenase, domain 1"/>
    <property type="match status" value="1"/>
</dbReference>
<dbReference type="HAMAP" id="MF_01512">
    <property type="entry name" value="FosB"/>
    <property type="match status" value="1"/>
</dbReference>
<dbReference type="InterPro" id="IPR051332">
    <property type="entry name" value="Fosfomycin_Res_Enzymes"/>
</dbReference>
<dbReference type="InterPro" id="IPR029068">
    <property type="entry name" value="Glyas_Bleomycin-R_OHBP_Dase"/>
</dbReference>
<dbReference type="InterPro" id="IPR004360">
    <property type="entry name" value="Glyas_Fos-R_dOase_dom"/>
</dbReference>
<dbReference type="InterPro" id="IPR022858">
    <property type="entry name" value="Metallothiol_Trafse_FosB"/>
</dbReference>
<dbReference type="InterPro" id="IPR037523">
    <property type="entry name" value="VOC"/>
</dbReference>
<dbReference type="NCBIfam" id="NF000493">
    <property type="entry name" value="Fos_BSH"/>
    <property type="match status" value="1"/>
</dbReference>
<dbReference type="NCBIfam" id="NF000063">
    <property type="entry name" value="Fos_BSH_Sepi"/>
    <property type="match status" value="1"/>
</dbReference>
<dbReference type="NCBIfam" id="NF003152">
    <property type="entry name" value="PRK04101.1"/>
    <property type="match status" value="1"/>
</dbReference>
<dbReference type="PANTHER" id="PTHR36113:SF6">
    <property type="entry name" value="FOSFOMYCIN RESISTANCE PROTEIN FOSX"/>
    <property type="match status" value="1"/>
</dbReference>
<dbReference type="PANTHER" id="PTHR36113">
    <property type="entry name" value="LYASE, PUTATIVE-RELATED-RELATED"/>
    <property type="match status" value="1"/>
</dbReference>
<dbReference type="Pfam" id="PF00903">
    <property type="entry name" value="Glyoxalase"/>
    <property type="match status" value="1"/>
</dbReference>
<dbReference type="SUPFAM" id="SSF54593">
    <property type="entry name" value="Glyoxalase/Bleomycin resistance protein/Dihydroxybiphenyl dioxygenase"/>
    <property type="match status" value="1"/>
</dbReference>
<dbReference type="PROSITE" id="PS51819">
    <property type="entry name" value="VOC"/>
    <property type="match status" value="1"/>
</dbReference>
<reference key="1">
    <citation type="journal article" date="2003" name="Mol. Microbiol.">
        <title>Genome-based analysis of virulence genes in a non-biofilm-forming Staphylococcus epidermidis strain (ATCC 12228).</title>
        <authorList>
            <person name="Zhang Y.-Q."/>
            <person name="Ren S.-X."/>
            <person name="Li H.-L."/>
            <person name="Wang Y.-X."/>
            <person name="Fu G."/>
            <person name="Yang J."/>
            <person name="Qin Z.-Q."/>
            <person name="Miao Y.-G."/>
            <person name="Wang W.-Y."/>
            <person name="Chen R.-S."/>
            <person name="Shen Y."/>
            <person name="Chen Z."/>
            <person name="Yuan Z.-H."/>
            <person name="Zhao G.-P."/>
            <person name="Qu D."/>
            <person name="Danchin A."/>
            <person name="Wen Y.-M."/>
        </authorList>
    </citation>
    <scope>NUCLEOTIDE SEQUENCE [LARGE SCALE GENOMIC DNA]</scope>
    <source>
        <strain>ATCC 12228 / FDA PCI 1200</strain>
    </source>
</reference>
<organism>
    <name type="scientific">Staphylococcus epidermidis (strain ATCC 12228 / FDA PCI 1200)</name>
    <dbReference type="NCBI Taxonomy" id="176280"/>
    <lineage>
        <taxon>Bacteria</taxon>
        <taxon>Bacillati</taxon>
        <taxon>Bacillota</taxon>
        <taxon>Bacilli</taxon>
        <taxon>Bacillales</taxon>
        <taxon>Staphylococcaceae</taxon>
        <taxon>Staphylococcus</taxon>
    </lineage>
</organism>
<comment type="function">
    <text evidence="1">Metallothiol transferase which confers resistance to fosfomycin by catalyzing the addition of a thiol cofactor to fosfomycin. L-cysteine is probably the physiological thiol donor.</text>
</comment>
<comment type="cofactor">
    <cofactor evidence="1">
        <name>Mg(2+)</name>
        <dbReference type="ChEBI" id="CHEBI:18420"/>
    </cofactor>
</comment>
<comment type="subunit">
    <text evidence="1">Homodimer.</text>
</comment>
<comment type="subcellular location">
    <subcellularLocation>
        <location evidence="1">Cytoplasm</location>
    </subcellularLocation>
</comment>
<comment type="similarity">
    <text evidence="1">Belongs to the fosfomycin resistance protein family. FosB subfamily.</text>
</comment>
<evidence type="ECO:0000255" key="1">
    <source>
        <dbReference type="HAMAP-Rule" id="MF_01512"/>
    </source>
</evidence>
<evidence type="ECO:0000255" key="2">
    <source>
        <dbReference type="PROSITE-ProRule" id="PRU01163"/>
    </source>
</evidence>
<name>FOSB_STAES</name>
<feature type="chain" id="PRO_0000164039" description="Metallothiol transferase FosB">
    <location>
        <begin position="1"/>
        <end position="142"/>
    </location>
</feature>
<feature type="domain" description="VOC" evidence="2">
    <location>
        <begin position="5"/>
        <end position="120"/>
    </location>
</feature>
<feature type="active site" description="Proton donor/acceptor" evidence="2">
    <location>
        <position position="116"/>
    </location>
</feature>
<feature type="binding site" evidence="1">
    <location>
        <position position="8"/>
    </location>
    <ligand>
        <name>Mg(2+)</name>
        <dbReference type="ChEBI" id="CHEBI:18420"/>
    </ligand>
</feature>
<feature type="binding site" evidence="1">
    <location>
        <position position="67"/>
    </location>
    <ligand>
        <name>Mg(2+)</name>
        <dbReference type="ChEBI" id="CHEBI:18420"/>
    </ligand>
</feature>
<feature type="binding site" evidence="1">
    <location>
        <position position="116"/>
    </location>
    <ligand>
        <name>Mg(2+)</name>
        <dbReference type="ChEBI" id="CHEBI:18420"/>
    </ligand>
</feature>
<sequence length="142" mass="16844">MEITSVNHICFSVSDLNTSIQFYKDILHGDLLVSGRTTAYLTIGHTWIALNQEKNIPRNEISHSYTHIAFSIDEEDFQQWIQWLKENQVNILKGRPRDIKDKKSIYFTDPDGHKIELHTGTLKDRMEYYKCENTHMQFYDEF</sequence>
<protein>
    <recommendedName>
        <fullName evidence="1">Metallothiol transferase FosB</fullName>
        <ecNumber evidence="1">2.5.1.-</ecNumber>
    </recommendedName>
    <alternativeName>
        <fullName evidence="1">Fosfomycin resistance protein</fullName>
    </alternativeName>
</protein>
<keyword id="KW-0046">Antibiotic resistance</keyword>
<keyword id="KW-0963">Cytoplasm</keyword>
<keyword id="KW-0460">Magnesium</keyword>
<keyword id="KW-0479">Metal-binding</keyword>
<keyword id="KW-0808">Transferase</keyword>
<accession>P59291</accession>
<gene>
    <name evidence="1" type="primary">fosB</name>
    <name type="ordered locus">SE_0231</name>
</gene>
<proteinExistence type="inferred from homology"/>